<name>RL23_YEREN</name>
<reference key="1">
    <citation type="journal article" date="1994" name="Mol. Med.">
        <title>The evolutionarily conserved ribosomal protein L23 and the cationic urease beta-subunit of Yersinia enterocolitica O:3 belong to the immunodominant antigens in Yersinia-triggered reactive arthritis: implications for autoimmunity.</title>
        <authorList>
            <person name="Mertz A.K.H."/>
            <person name="Daser A."/>
            <person name="Skurnik M."/>
            <person name="Wiesmueller K.-H."/>
            <person name="Braun J."/>
            <person name="Appel H."/>
            <person name="Batsford S."/>
            <person name="Wu P."/>
            <person name="Distler A."/>
            <person name="Sieper J."/>
        </authorList>
    </citation>
    <scope>NUCLEOTIDE SEQUENCE [GENOMIC DNA]</scope>
    <scope>PARTIAL PROTEIN SEQUENCE</scope>
    <source>
        <strain>6471/76 / Serotype O:3</strain>
    </source>
</reference>
<accession>P0C2N0</accession>
<accession>P41278</accession>
<proteinExistence type="evidence at protein level"/>
<organism>
    <name type="scientific">Yersinia enterocolitica</name>
    <dbReference type="NCBI Taxonomy" id="630"/>
    <lineage>
        <taxon>Bacteria</taxon>
        <taxon>Pseudomonadati</taxon>
        <taxon>Pseudomonadota</taxon>
        <taxon>Gammaproteobacteria</taxon>
        <taxon>Enterobacterales</taxon>
        <taxon>Yersiniaceae</taxon>
        <taxon>Yersinia</taxon>
    </lineage>
</organism>
<dbReference type="EMBL" id="U11251">
    <property type="protein sequence ID" value="AAC43512.1"/>
    <property type="molecule type" value="Genomic_DNA"/>
</dbReference>
<dbReference type="RefSeq" id="WP_005159841.1">
    <property type="nucleotide sequence ID" value="NZ_WJHZ01000054.1"/>
</dbReference>
<dbReference type="SMR" id="P0C2N0"/>
<dbReference type="STRING" id="1443113.LC20_00338"/>
<dbReference type="GeneID" id="97454233"/>
<dbReference type="eggNOG" id="COG0089">
    <property type="taxonomic scope" value="Bacteria"/>
</dbReference>
<dbReference type="OMA" id="DHRAAKP"/>
<dbReference type="OrthoDB" id="9793353at2"/>
<dbReference type="GO" id="GO:1990904">
    <property type="term" value="C:ribonucleoprotein complex"/>
    <property type="evidence" value="ECO:0007669"/>
    <property type="project" value="UniProtKB-KW"/>
</dbReference>
<dbReference type="GO" id="GO:0005840">
    <property type="term" value="C:ribosome"/>
    <property type="evidence" value="ECO:0007669"/>
    <property type="project" value="UniProtKB-KW"/>
</dbReference>
<dbReference type="GO" id="GO:0019843">
    <property type="term" value="F:rRNA binding"/>
    <property type="evidence" value="ECO:0007669"/>
    <property type="project" value="UniProtKB-UniRule"/>
</dbReference>
<dbReference type="GO" id="GO:0003735">
    <property type="term" value="F:structural constituent of ribosome"/>
    <property type="evidence" value="ECO:0007669"/>
    <property type="project" value="InterPro"/>
</dbReference>
<dbReference type="GO" id="GO:0006412">
    <property type="term" value="P:translation"/>
    <property type="evidence" value="ECO:0007669"/>
    <property type="project" value="UniProtKB-UniRule"/>
</dbReference>
<dbReference type="FunFam" id="3.30.70.330:FF:000001">
    <property type="entry name" value="50S ribosomal protein L23"/>
    <property type="match status" value="1"/>
</dbReference>
<dbReference type="Gene3D" id="3.30.70.330">
    <property type="match status" value="1"/>
</dbReference>
<dbReference type="HAMAP" id="MF_01369_B">
    <property type="entry name" value="Ribosomal_uL23_B"/>
    <property type="match status" value="1"/>
</dbReference>
<dbReference type="InterPro" id="IPR012677">
    <property type="entry name" value="Nucleotide-bd_a/b_plait_sf"/>
</dbReference>
<dbReference type="InterPro" id="IPR013025">
    <property type="entry name" value="Ribosomal_uL23-like"/>
</dbReference>
<dbReference type="InterPro" id="IPR012678">
    <property type="entry name" value="Ribosomal_uL23/eL15/eS24_sf"/>
</dbReference>
<dbReference type="InterPro" id="IPR001014">
    <property type="entry name" value="Ribosomal_uL23_CS"/>
</dbReference>
<dbReference type="NCBIfam" id="NF004358">
    <property type="entry name" value="PRK05738.1-1"/>
    <property type="match status" value="1"/>
</dbReference>
<dbReference type="NCBIfam" id="NF004359">
    <property type="entry name" value="PRK05738.1-3"/>
    <property type="match status" value="1"/>
</dbReference>
<dbReference type="NCBIfam" id="NF004363">
    <property type="entry name" value="PRK05738.2-4"/>
    <property type="match status" value="1"/>
</dbReference>
<dbReference type="NCBIfam" id="NF004366">
    <property type="entry name" value="PRK05738.3-2"/>
    <property type="match status" value="1"/>
</dbReference>
<dbReference type="PANTHER" id="PTHR11620">
    <property type="entry name" value="60S RIBOSOMAL PROTEIN L23A"/>
    <property type="match status" value="1"/>
</dbReference>
<dbReference type="Pfam" id="PF00276">
    <property type="entry name" value="Ribosomal_L23"/>
    <property type="match status" value="1"/>
</dbReference>
<dbReference type="SUPFAM" id="SSF54189">
    <property type="entry name" value="Ribosomal proteins S24e, L23 and L15e"/>
    <property type="match status" value="1"/>
</dbReference>
<dbReference type="PROSITE" id="PS00050">
    <property type="entry name" value="RIBOSOMAL_L23"/>
    <property type="match status" value="1"/>
</dbReference>
<keyword id="KW-0903">Direct protein sequencing</keyword>
<keyword id="KW-0687">Ribonucleoprotein</keyword>
<keyword id="KW-0689">Ribosomal protein</keyword>
<keyword id="KW-0694">RNA-binding</keyword>
<keyword id="KW-0699">rRNA-binding</keyword>
<sequence>MIREERLLKVLRAPHVSEKASAAMEKNNTIVLKVAKDATKAEIKAAVQKLFEVEVEDVNTLLVKGKSKRHGQRVGRRSDWKKAYVTLKEGQNLDFIGGAE</sequence>
<protein>
    <recommendedName>
        <fullName evidence="1">Large ribosomal subunit protein uL23</fullName>
    </recommendedName>
    <alternativeName>
        <fullName evidence="2">50S ribosomal protein L23</fullName>
    </alternativeName>
</protein>
<evidence type="ECO:0000255" key="1">
    <source>
        <dbReference type="HAMAP-Rule" id="MF_01369"/>
    </source>
</evidence>
<evidence type="ECO:0000305" key="2"/>
<gene>
    <name evidence="1" type="primary">rplW</name>
</gene>
<comment type="function">
    <text evidence="1">One of the early assembly proteins it binds 23S rRNA. One of the proteins that surrounds the polypeptide exit tunnel on the outside of the ribosome. Forms the main docking site for trigger factor binding to the ribosome.</text>
</comment>
<comment type="subunit">
    <text evidence="1">Part of the 50S ribosomal subunit. Contacts protein L29, and trigger factor when it is bound to the ribosome.</text>
</comment>
<comment type="similarity">
    <text evidence="1">Belongs to the universal ribosomal protein uL23 family.</text>
</comment>
<feature type="chain" id="PRO_0000129430" description="Large ribosomal subunit protein uL23">
    <location>
        <begin position="1"/>
        <end position="100"/>
    </location>
</feature>